<gene>
    <name evidence="1" type="primary">mde1</name>
    <name type="ORF">AN3593</name>
</gene>
<protein>
    <recommendedName>
        <fullName evidence="1">Methylthioribulose-1-phosphate dehydratase</fullName>
        <shortName evidence="1">MTRu-1-P dehydratase</shortName>
        <ecNumber evidence="1">4.2.1.109</ecNumber>
    </recommendedName>
</protein>
<feature type="chain" id="PRO_0000393824" description="Methylthioribulose-1-phosphate dehydratase">
    <location>
        <begin position="1"/>
        <end position="240"/>
    </location>
</feature>
<feature type="active site" description="Proton donor/acceptor" evidence="1">
    <location>
        <position position="146"/>
    </location>
</feature>
<feature type="binding site" evidence="1">
    <location>
        <position position="100"/>
    </location>
    <ligand>
        <name>substrate</name>
    </ligand>
</feature>
<feature type="binding site" evidence="1">
    <location>
        <position position="117"/>
    </location>
    <ligand>
        <name>Zn(2+)</name>
        <dbReference type="ChEBI" id="CHEBI:29105"/>
    </ligand>
</feature>
<feature type="binding site" evidence="1">
    <location>
        <position position="119"/>
    </location>
    <ligand>
        <name>Zn(2+)</name>
        <dbReference type="ChEBI" id="CHEBI:29105"/>
    </ligand>
</feature>
<feature type="binding site" evidence="1">
    <location>
        <position position="202"/>
    </location>
    <ligand>
        <name>Zn(2+)</name>
        <dbReference type="ChEBI" id="CHEBI:29105"/>
    </ligand>
</feature>
<comment type="function">
    <text evidence="1">Catalyzes the dehydration of methylthioribulose-1-phosphate (MTRu-1-P) into 2,3-diketo-5-methylthiopentyl-1-phosphate (DK-MTP-1-P).</text>
</comment>
<comment type="catalytic activity">
    <reaction evidence="1">
        <text>5-(methylsulfanyl)-D-ribulose 1-phosphate = 5-methylsulfanyl-2,3-dioxopentyl phosphate + H2O</text>
        <dbReference type="Rhea" id="RHEA:15549"/>
        <dbReference type="ChEBI" id="CHEBI:15377"/>
        <dbReference type="ChEBI" id="CHEBI:58548"/>
        <dbReference type="ChEBI" id="CHEBI:58828"/>
        <dbReference type="EC" id="4.2.1.109"/>
    </reaction>
</comment>
<comment type="cofactor">
    <cofactor evidence="1">
        <name>Zn(2+)</name>
        <dbReference type="ChEBI" id="CHEBI:29105"/>
    </cofactor>
    <text evidence="1">Binds 1 zinc ion per subunit.</text>
</comment>
<comment type="pathway">
    <text evidence="1">Amino-acid biosynthesis; L-methionine biosynthesis via salvage pathway; L-methionine from S-methyl-5-thio-alpha-D-ribose 1-phosphate: step 2/6.</text>
</comment>
<comment type="subcellular location">
    <subcellularLocation>
        <location evidence="1">Cytoplasm</location>
    </subcellularLocation>
</comment>
<comment type="similarity">
    <text evidence="1">Belongs to the aldolase class II family. MtnB subfamily.</text>
</comment>
<proteinExistence type="inferred from homology"/>
<dbReference type="EC" id="4.2.1.109" evidence="1"/>
<dbReference type="EMBL" id="AACD01000061">
    <property type="protein sequence ID" value="EAA59801.1"/>
    <property type="molecule type" value="Genomic_DNA"/>
</dbReference>
<dbReference type="EMBL" id="BN001302">
    <property type="protein sequence ID" value="CBF75817.1"/>
    <property type="molecule type" value="Genomic_DNA"/>
</dbReference>
<dbReference type="RefSeq" id="XP_661197.1">
    <property type="nucleotide sequence ID" value="XM_656105.1"/>
</dbReference>
<dbReference type="SMR" id="Q5B787"/>
<dbReference type="FunCoup" id="Q5B787">
    <property type="interactions" value="249"/>
</dbReference>
<dbReference type="STRING" id="227321.Q5B787"/>
<dbReference type="EnsemblFungi" id="CBF75817">
    <property type="protein sequence ID" value="CBF75817"/>
    <property type="gene ID" value="ANIA_03593"/>
</dbReference>
<dbReference type="KEGG" id="ani:ANIA_03593"/>
<dbReference type="VEuPathDB" id="FungiDB:AN3593"/>
<dbReference type="eggNOG" id="KOG2631">
    <property type="taxonomic scope" value="Eukaryota"/>
</dbReference>
<dbReference type="HOGENOM" id="CLU_006033_4_0_1"/>
<dbReference type="InParanoid" id="Q5B787"/>
<dbReference type="OMA" id="WFPGTSG"/>
<dbReference type="OrthoDB" id="191080at2759"/>
<dbReference type="UniPathway" id="UPA00904">
    <property type="reaction ID" value="UER00875"/>
</dbReference>
<dbReference type="Proteomes" id="UP000000560">
    <property type="component" value="Chromosome II"/>
</dbReference>
<dbReference type="GO" id="GO:0005737">
    <property type="term" value="C:cytoplasm"/>
    <property type="evidence" value="ECO:0000318"/>
    <property type="project" value="GO_Central"/>
</dbReference>
<dbReference type="GO" id="GO:0046570">
    <property type="term" value="F:methylthioribulose 1-phosphate dehydratase activity"/>
    <property type="evidence" value="ECO:0000318"/>
    <property type="project" value="GO_Central"/>
</dbReference>
<dbReference type="GO" id="GO:0008270">
    <property type="term" value="F:zinc ion binding"/>
    <property type="evidence" value="ECO:0007669"/>
    <property type="project" value="UniProtKB-UniRule"/>
</dbReference>
<dbReference type="GO" id="GO:0019509">
    <property type="term" value="P:L-methionine salvage from methylthioadenosine"/>
    <property type="evidence" value="ECO:0000318"/>
    <property type="project" value="GO_Central"/>
</dbReference>
<dbReference type="FunFam" id="3.40.225.10:FF:000003">
    <property type="entry name" value="Methylthioribulose-1-phosphate dehydratase"/>
    <property type="match status" value="1"/>
</dbReference>
<dbReference type="Gene3D" id="3.40.225.10">
    <property type="entry name" value="Class II aldolase/adducin N-terminal domain"/>
    <property type="match status" value="1"/>
</dbReference>
<dbReference type="HAMAP" id="MF_03116">
    <property type="entry name" value="Salvage_MtnB_euk"/>
    <property type="match status" value="1"/>
</dbReference>
<dbReference type="InterPro" id="IPR001303">
    <property type="entry name" value="Aldolase_II/adducin_N"/>
</dbReference>
<dbReference type="InterPro" id="IPR036409">
    <property type="entry name" value="Aldolase_II/adducin_N_sf"/>
</dbReference>
<dbReference type="InterPro" id="IPR017714">
    <property type="entry name" value="MethylthioRu-1-P_deHdtase_MtnB"/>
</dbReference>
<dbReference type="InterPro" id="IPR027514">
    <property type="entry name" value="Salvage_MtnB_euk"/>
</dbReference>
<dbReference type="NCBIfam" id="TIGR03328">
    <property type="entry name" value="salvage_mtnB"/>
    <property type="match status" value="1"/>
</dbReference>
<dbReference type="PANTHER" id="PTHR10640">
    <property type="entry name" value="METHYLTHIORIBULOSE-1-PHOSPHATE DEHYDRATASE"/>
    <property type="match status" value="1"/>
</dbReference>
<dbReference type="PANTHER" id="PTHR10640:SF7">
    <property type="entry name" value="METHYLTHIORIBULOSE-1-PHOSPHATE DEHYDRATASE"/>
    <property type="match status" value="1"/>
</dbReference>
<dbReference type="Pfam" id="PF00596">
    <property type="entry name" value="Aldolase_II"/>
    <property type="match status" value="1"/>
</dbReference>
<dbReference type="SMART" id="SM01007">
    <property type="entry name" value="Aldolase_II"/>
    <property type="match status" value="1"/>
</dbReference>
<dbReference type="SUPFAM" id="SSF53639">
    <property type="entry name" value="AraD/HMP-PK domain-like"/>
    <property type="match status" value="1"/>
</dbReference>
<sequence length="240" mass="26995">MSQGLQQQNNDHLVQSDDPEHPANLIPELCRKFYNWGWVTGTGGGTSIRRGEHIFIAPSGVQKELMQPHNIFVLQYPTPKYPPSERKYIRKPLDLKPSACTPLFLAAFERGAGCCIHTHSQWAVLVTLLVEREKGPEGCFEISNIEQIKGIPKGPGKGMLGYFDTLRIPIIDNTAFEEDLTGSLEKAMDAYPDTYAVLVRRHGIYVWGDNVAKAKTQCESLDYLFQLAVEMHKLGIPWVK</sequence>
<keyword id="KW-0028">Amino-acid biosynthesis</keyword>
<keyword id="KW-0963">Cytoplasm</keyword>
<keyword id="KW-0456">Lyase</keyword>
<keyword id="KW-0479">Metal-binding</keyword>
<keyword id="KW-0486">Methionine biosynthesis</keyword>
<keyword id="KW-1185">Reference proteome</keyword>
<keyword id="KW-0862">Zinc</keyword>
<reference key="1">
    <citation type="journal article" date="2005" name="Nature">
        <title>Sequencing of Aspergillus nidulans and comparative analysis with A. fumigatus and A. oryzae.</title>
        <authorList>
            <person name="Galagan J.E."/>
            <person name="Calvo S.E."/>
            <person name="Cuomo C."/>
            <person name="Ma L.-J."/>
            <person name="Wortman J.R."/>
            <person name="Batzoglou S."/>
            <person name="Lee S.-I."/>
            <person name="Bastuerkmen M."/>
            <person name="Spevak C.C."/>
            <person name="Clutterbuck J."/>
            <person name="Kapitonov V."/>
            <person name="Jurka J."/>
            <person name="Scazzocchio C."/>
            <person name="Farman M.L."/>
            <person name="Butler J."/>
            <person name="Purcell S."/>
            <person name="Harris S."/>
            <person name="Braus G.H."/>
            <person name="Draht O."/>
            <person name="Busch S."/>
            <person name="D'Enfert C."/>
            <person name="Bouchier C."/>
            <person name="Goldman G.H."/>
            <person name="Bell-Pedersen D."/>
            <person name="Griffiths-Jones S."/>
            <person name="Doonan J.H."/>
            <person name="Yu J."/>
            <person name="Vienken K."/>
            <person name="Pain A."/>
            <person name="Freitag M."/>
            <person name="Selker E.U."/>
            <person name="Archer D.B."/>
            <person name="Penalva M.A."/>
            <person name="Oakley B.R."/>
            <person name="Momany M."/>
            <person name="Tanaka T."/>
            <person name="Kumagai T."/>
            <person name="Asai K."/>
            <person name="Machida M."/>
            <person name="Nierman W.C."/>
            <person name="Denning D.W."/>
            <person name="Caddick M.X."/>
            <person name="Hynes M."/>
            <person name="Paoletti M."/>
            <person name="Fischer R."/>
            <person name="Miller B.L."/>
            <person name="Dyer P.S."/>
            <person name="Sachs M.S."/>
            <person name="Osmani S.A."/>
            <person name="Birren B.W."/>
        </authorList>
    </citation>
    <scope>NUCLEOTIDE SEQUENCE [LARGE SCALE GENOMIC DNA]</scope>
    <source>
        <strain>FGSC A4 / ATCC 38163 / CBS 112.46 / NRRL 194 / M139</strain>
    </source>
</reference>
<reference key="2">
    <citation type="journal article" date="2009" name="Fungal Genet. Biol.">
        <title>The 2008 update of the Aspergillus nidulans genome annotation: a community effort.</title>
        <authorList>
            <person name="Wortman J.R."/>
            <person name="Gilsenan J.M."/>
            <person name="Joardar V."/>
            <person name="Deegan J."/>
            <person name="Clutterbuck J."/>
            <person name="Andersen M.R."/>
            <person name="Archer D."/>
            <person name="Bencina M."/>
            <person name="Braus G."/>
            <person name="Coutinho P."/>
            <person name="von Dohren H."/>
            <person name="Doonan J."/>
            <person name="Driessen A.J."/>
            <person name="Durek P."/>
            <person name="Espeso E."/>
            <person name="Fekete E."/>
            <person name="Flipphi M."/>
            <person name="Estrada C.G."/>
            <person name="Geysens S."/>
            <person name="Goldman G."/>
            <person name="de Groot P.W."/>
            <person name="Hansen K."/>
            <person name="Harris S.D."/>
            <person name="Heinekamp T."/>
            <person name="Helmstaedt K."/>
            <person name="Henrissat B."/>
            <person name="Hofmann G."/>
            <person name="Homan T."/>
            <person name="Horio T."/>
            <person name="Horiuchi H."/>
            <person name="James S."/>
            <person name="Jones M."/>
            <person name="Karaffa L."/>
            <person name="Karanyi Z."/>
            <person name="Kato M."/>
            <person name="Keller N."/>
            <person name="Kelly D.E."/>
            <person name="Kiel J.A."/>
            <person name="Kim J.M."/>
            <person name="van der Klei I.J."/>
            <person name="Klis F.M."/>
            <person name="Kovalchuk A."/>
            <person name="Krasevec N."/>
            <person name="Kubicek C.P."/>
            <person name="Liu B."/>
            <person name="Maccabe A."/>
            <person name="Meyer V."/>
            <person name="Mirabito P."/>
            <person name="Miskei M."/>
            <person name="Mos M."/>
            <person name="Mullins J."/>
            <person name="Nelson D.R."/>
            <person name="Nielsen J."/>
            <person name="Oakley B.R."/>
            <person name="Osmani S.A."/>
            <person name="Pakula T."/>
            <person name="Paszewski A."/>
            <person name="Paulsen I."/>
            <person name="Pilsyk S."/>
            <person name="Pocsi I."/>
            <person name="Punt P.J."/>
            <person name="Ram A.F."/>
            <person name="Ren Q."/>
            <person name="Robellet X."/>
            <person name="Robson G."/>
            <person name="Seiboth B."/>
            <person name="van Solingen P."/>
            <person name="Specht T."/>
            <person name="Sun J."/>
            <person name="Taheri-Talesh N."/>
            <person name="Takeshita N."/>
            <person name="Ussery D."/>
            <person name="vanKuyk P.A."/>
            <person name="Visser H."/>
            <person name="van de Vondervoort P.J."/>
            <person name="de Vries R.P."/>
            <person name="Walton J."/>
            <person name="Xiang X."/>
            <person name="Xiong Y."/>
            <person name="Zeng A.P."/>
            <person name="Brandt B.W."/>
            <person name="Cornell M.J."/>
            <person name="van den Hondel C.A."/>
            <person name="Visser J."/>
            <person name="Oliver S.G."/>
            <person name="Turner G."/>
        </authorList>
    </citation>
    <scope>GENOME REANNOTATION</scope>
    <source>
        <strain>FGSC A4 / ATCC 38163 / CBS 112.46 / NRRL 194 / M139</strain>
    </source>
</reference>
<accession>Q5B787</accession>
<accession>C8V4D6</accession>
<name>MTNB_EMENI</name>
<organism>
    <name type="scientific">Emericella nidulans (strain FGSC A4 / ATCC 38163 / CBS 112.46 / NRRL 194 / M139)</name>
    <name type="common">Aspergillus nidulans</name>
    <dbReference type="NCBI Taxonomy" id="227321"/>
    <lineage>
        <taxon>Eukaryota</taxon>
        <taxon>Fungi</taxon>
        <taxon>Dikarya</taxon>
        <taxon>Ascomycota</taxon>
        <taxon>Pezizomycotina</taxon>
        <taxon>Eurotiomycetes</taxon>
        <taxon>Eurotiomycetidae</taxon>
        <taxon>Eurotiales</taxon>
        <taxon>Aspergillaceae</taxon>
        <taxon>Aspergillus</taxon>
        <taxon>Aspergillus subgen. Nidulantes</taxon>
    </lineage>
</organism>
<evidence type="ECO:0000255" key="1">
    <source>
        <dbReference type="HAMAP-Rule" id="MF_03116"/>
    </source>
</evidence>